<proteinExistence type="evidence at transcript level"/>
<evidence type="ECO:0000250" key="1"/>
<evidence type="ECO:0000255" key="2"/>
<evidence type="ECO:0000269" key="3">
    <source>
    </source>
</evidence>
<evidence type="ECO:0000305" key="4"/>
<accession>Q8CHN2</accession>
<accession>Q6MG54</accession>
<dbReference type="EMBL" id="AJ515240">
    <property type="protein sequence ID" value="CAD56202.1"/>
    <property type="molecule type" value="mRNA"/>
</dbReference>
<dbReference type="EMBL" id="BX883045">
    <property type="protein sequence ID" value="CAE83992.1"/>
    <property type="molecule type" value="Genomic_DNA"/>
</dbReference>
<dbReference type="FunCoup" id="Q8CHN2">
    <property type="interactions" value="1"/>
</dbReference>
<dbReference type="STRING" id="10116.ENSRNOP00000001122"/>
<dbReference type="GlyCosmos" id="Q8CHN2">
    <property type="glycosylation" value="1 site, No reported glycans"/>
</dbReference>
<dbReference type="GlyGen" id="Q8CHN2">
    <property type="glycosylation" value="1 site"/>
</dbReference>
<dbReference type="PaxDb" id="10116-ENSRNOP00000001122"/>
<dbReference type="UCSC" id="RGD:735180">
    <property type="organism name" value="rat"/>
</dbReference>
<dbReference type="AGR" id="RGD:735180"/>
<dbReference type="RGD" id="735180">
    <property type="gene designation" value="Ly6g5c"/>
</dbReference>
<dbReference type="eggNOG" id="ENOG502TD7Y">
    <property type="taxonomic scope" value="Eukaryota"/>
</dbReference>
<dbReference type="InParanoid" id="Q8CHN2"/>
<dbReference type="PhylomeDB" id="Q8CHN2"/>
<dbReference type="PRO" id="PR:Q8CHN2"/>
<dbReference type="Proteomes" id="UP000002494">
    <property type="component" value="Unplaced"/>
</dbReference>
<dbReference type="GO" id="GO:0009897">
    <property type="term" value="C:external side of plasma membrane"/>
    <property type="evidence" value="ECO:0000266"/>
    <property type="project" value="RGD"/>
</dbReference>
<dbReference type="GO" id="GO:0005576">
    <property type="term" value="C:extracellular region"/>
    <property type="evidence" value="ECO:0007669"/>
    <property type="project" value="UniProtKB-SubCell"/>
</dbReference>
<dbReference type="GO" id="GO:0032991">
    <property type="term" value="C:protein-containing complex"/>
    <property type="evidence" value="ECO:0000266"/>
    <property type="project" value="RGD"/>
</dbReference>
<dbReference type="GO" id="GO:0042802">
    <property type="term" value="F:identical protein binding"/>
    <property type="evidence" value="ECO:0000266"/>
    <property type="project" value="RGD"/>
</dbReference>
<dbReference type="CDD" id="cd23545">
    <property type="entry name" value="TFP_LU_ECD_Ly6G5c"/>
    <property type="match status" value="1"/>
</dbReference>
<dbReference type="InterPro" id="IPR016054">
    <property type="entry name" value="LY6_UPA_recep-like"/>
</dbReference>
<dbReference type="InterPro" id="IPR026110">
    <property type="entry name" value="LY6G5C"/>
</dbReference>
<dbReference type="PANTHER" id="PTHR14909">
    <property type="entry name" value="LYMPHOCYTE ANTIGEN 6 COMPLEX LOCUS PROTEIN G5C"/>
    <property type="match status" value="1"/>
</dbReference>
<dbReference type="PANTHER" id="PTHR14909:SF6">
    <property type="entry name" value="LYMPHOCYTE ANTIGEN 6 COMPLEX LOCUS PROTEIN G5C"/>
    <property type="match status" value="1"/>
</dbReference>
<dbReference type="Pfam" id="PF00021">
    <property type="entry name" value="UPAR_LY6"/>
    <property type="match status" value="1"/>
</dbReference>
<keyword id="KW-1015">Disulfide bond</keyword>
<keyword id="KW-0325">Glycoprotein</keyword>
<keyword id="KW-1185">Reference proteome</keyword>
<keyword id="KW-0964">Secreted</keyword>
<keyword id="KW-0732">Signal</keyword>
<comment type="function">
    <text evidence="1">May have a role in hematopoietic cell differentiation.</text>
</comment>
<comment type="subunit">
    <text evidence="1">Forms oligomers.</text>
</comment>
<comment type="subcellular location">
    <subcellularLocation>
        <location evidence="4">Secreted</location>
    </subcellularLocation>
</comment>
<comment type="tissue specificity">
    <text evidence="3">Expression restricted to the caput of epididymis. Detected only from day 24 postnatum.</text>
</comment>
<comment type="PTM">
    <text evidence="1">N-glycosylated.</text>
</comment>
<name>LY65C_RAT</name>
<gene>
    <name type="primary">Ly6g5c</name>
    <name type="synonym">Re8</name>
</gene>
<reference key="1">
    <citation type="journal article" date="2003" name="Asian J. Androl.">
        <title>Rodent epididymal cDNAs identified by sequence homology to human and canine counterparts.</title>
        <authorList>
            <person name="Kaepler-Hanno K."/>
            <person name="Kirchhoff C."/>
        </authorList>
    </citation>
    <scope>NUCLEOTIDE SEQUENCE [MRNA]</scope>
    <scope>TISSUE SPECIFICITY</scope>
    <source>
        <strain>Sprague-Dawley</strain>
    </source>
</reference>
<reference key="2">
    <citation type="journal article" date="2004" name="Genome Res.">
        <title>The genomic sequence and comparative analysis of the rat major histocompatibility complex.</title>
        <authorList>
            <person name="Hurt P."/>
            <person name="Walter L."/>
            <person name="Sudbrak R."/>
            <person name="Klages S."/>
            <person name="Mueller I."/>
            <person name="Shiina T."/>
            <person name="Inoko H."/>
            <person name="Lehrach H."/>
            <person name="Guenther E."/>
            <person name="Reinhardt R."/>
            <person name="Himmelbauer H."/>
        </authorList>
    </citation>
    <scope>NUCLEOTIDE SEQUENCE [LARGE SCALE GENOMIC DNA]</scope>
    <source>
        <strain>Brown Norway</strain>
    </source>
</reference>
<organism>
    <name type="scientific">Rattus norvegicus</name>
    <name type="common">Rat</name>
    <dbReference type="NCBI Taxonomy" id="10116"/>
    <lineage>
        <taxon>Eukaryota</taxon>
        <taxon>Metazoa</taxon>
        <taxon>Chordata</taxon>
        <taxon>Craniata</taxon>
        <taxon>Vertebrata</taxon>
        <taxon>Euteleostomi</taxon>
        <taxon>Mammalia</taxon>
        <taxon>Eutheria</taxon>
        <taxon>Euarchontoglires</taxon>
        <taxon>Glires</taxon>
        <taxon>Rodentia</taxon>
        <taxon>Myomorpha</taxon>
        <taxon>Muroidea</taxon>
        <taxon>Muridae</taxon>
        <taxon>Murinae</taxon>
        <taxon>Rattus</taxon>
    </lineage>
</organism>
<sequence length="145" mass="15985">MSGLAASWSLKPLGPHGVTQALCAVLLAVLVTMNVVLGDTLLDIPSQSPPLNQYLHCYRCLLETEELGCLLGSDTCLTPLGSTCVTLHIKNSSGFNVMVSDCRNKEQMVDCSYTRASPVFGFWIFYQCCFLDFCNNPKNRKNTMH</sequence>
<feature type="signal peptide" evidence="2">
    <location>
        <begin position="1"/>
        <end position="38"/>
    </location>
</feature>
<feature type="chain" id="PRO_5000069914" description="Lymphocyte antigen 6 complex locus protein G5c">
    <location>
        <begin position="39"/>
        <end position="145"/>
    </location>
</feature>
<feature type="domain" description="UPAR/Ly6">
    <location>
        <begin position="55"/>
        <end position="145"/>
    </location>
</feature>
<feature type="glycosylation site" description="N-linked (GlcNAc...) asparagine" evidence="2">
    <location>
        <position position="91"/>
    </location>
</feature>
<feature type="disulfide bond" evidence="1">
    <location>
        <begin position="57"/>
        <end position="84"/>
    </location>
</feature>
<feature type="disulfide bond" evidence="1">
    <location>
        <begin position="60"/>
        <end position="69"/>
    </location>
</feature>
<feature type="disulfide bond" evidence="1">
    <location>
        <begin position="76"/>
        <end position="102"/>
    </location>
</feature>
<feature type="disulfide bond" evidence="1">
    <location>
        <begin position="111"/>
        <end position="128"/>
    </location>
</feature>
<feature type="disulfide bond" evidence="1">
    <location>
        <begin position="129"/>
        <end position="134"/>
    </location>
</feature>
<feature type="sequence conflict" description="In Ref. 2; CAE83992." evidence="4" ref="2">
    <original>T</original>
    <variation>N</variation>
    <location>
        <position position="40"/>
    </location>
</feature>
<protein>
    <recommendedName>
        <fullName>Lymphocyte antigen 6 complex locus protein G5c</fullName>
    </recommendedName>
    <alternativeName>
        <fullName>Epididymal secretory protein 8</fullName>
        <shortName>Protein RE8</shortName>
    </alternativeName>
</protein>